<sequence length="91" mass="9647">MANKQDLIAKVAEATELTKKDSAAAVDAVFSTIEAFLAEGEKVQLIGFGNFEVRERAARKGRNPQTGAEIEIAASKVPAFKAGKALKDAVK</sequence>
<feature type="chain" id="PRO_0000104982" description="DNA-binding protein HU">
    <location>
        <begin position="1"/>
        <end position="91"/>
    </location>
</feature>
<protein>
    <recommendedName>
        <fullName>DNA-binding protein HU</fullName>
    </recommendedName>
</protein>
<accession>P0C0H3</accession>
<accession>P0A3H9</accession>
<accession>Q48XT4</accession>
<accession>Q9XB23</accession>
<name>DBH_STRP1</name>
<proteinExistence type="inferred from homology"/>
<keyword id="KW-0226">DNA condensation</keyword>
<keyword id="KW-0238">DNA-binding</keyword>
<keyword id="KW-1185">Reference proteome</keyword>
<keyword id="KW-0843">Virulence</keyword>
<comment type="function">
    <text evidence="1">Histone-like DNA-binding protein which is capable of wrapping DNA to stabilize it, and thus to prevent its denaturation under extreme environmental conditions. Also seems to act as a fortuitous virulence factor in delayed sequelae by binding to heparan sulfate-proteoglycans in the extracellular matrix of target organs and acting as a nidus for in situ immune complex formation (By similarity).</text>
</comment>
<comment type="similarity">
    <text evidence="2">Belongs to the bacterial histone-like protein family.</text>
</comment>
<evidence type="ECO:0000250" key="1"/>
<evidence type="ECO:0000305" key="2"/>
<reference key="1">
    <citation type="journal article" date="2001" name="Proc. Natl. Acad. Sci. U.S.A.">
        <title>Complete genome sequence of an M1 strain of Streptococcus pyogenes.</title>
        <authorList>
            <person name="Ferretti J.J."/>
            <person name="McShan W.M."/>
            <person name="Ajdic D.J."/>
            <person name="Savic D.J."/>
            <person name="Savic G."/>
            <person name="Lyon K."/>
            <person name="Primeaux C."/>
            <person name="Sezate S."/>
            <person name="Suvorov A.N."/>
            <person name="Kenton S."/>
            <person name="Lai H.S."/>
            <person name="Lin S.P."/>
            <person name="Qian Y."/>
            <person name="Jia H.G."/>
            <person name="Najar F.Z."/>
            <person name="Ren Q."/>
            <person name="Zhu H."/>
            <person name="Song L."/>
            <person name="White J."/>
            <person name="Yuan X."/>
            <person name="Clifton S.W."/>
            <person name="Roe B.A."/>
            <person name="McLaughlin R.E."/>
        </authorList>
    </citation>
    <scope>NUCLEOTIDE SEQUENCE [LARGE SCALE GENOMIC DNA]</scope>
    <source>
        <strain>ATCC 700294 / SF370 / Serotype M1</strain>
    </source>
</reference>
<reference key="2">
    <citation type="journal article" date="2005" name="J. Infect. Dis.">
        <title>Evolutionary origin and emergence of a highly successful clone of serotype M1 group A Streptococcus involved multiple horizontal gene transfer events.</title>
        <authorList>
            <person name="Sumby P."/>
            <person name="Porcella S.F."/>
            <person name="Madrigal A.G."/>
            <person name="Barbian K.D."/>
            <person name="Virtaneva K."/>
            <person name="Ricklefs S.M."/>
            <person name="Sturdevant D.E."/>
            <person name="Graham M.R."/>
            <person name="Vuopio-Varkila J."/>
            <person name="Hoe N.P."/>
            <person name="Musser J.M."/>
        </authorList>
    </citation>
    <scope>NUCLEOTIDE SEQUENCE [LARGE SCALE GENOMIC DNA]</scope>
    <source>
        <strain>ATCC BAA-947 / MGAS5005 / Serotype M1</strain>
    </source>
</reference>
<gene>
    <name type="primary">hup</name>
    <name type="synonym">hlpA</name>
    <name type="ordered locus">SPy_1489</name>
    <name type="ordered locus">M5005_Spy1223</name>
</gene>
<organism>
    <name type="scientific">Streptococcus pyogenes serotype M1</name>
    <dbReference type="NCBI Taxonomy" id="301447"/>
    <lineage>
        <taxon>Bacteria</taxon>
        <taxon>Bacillati</taxon>
        <taxon>Bacillota</taxon>
        <taxon>Bacilli</taxon>
        <taxon>Lactobacillales</taxon>
        <taxon>Streptococcaceae</taxon>
        <taxon>Streptococcus</taxon>
    </lineage>
</organism>
<dbReference type="EMBL" id="AE004092">
    <property type="protein sequence ID" value="AAK34289.1"/>
    <property type="molecule type" value="Genomic_DNA"/>
</dbReference>
<dbReference type="EMBL" id="CP000017">
    <property type="protein sequence ID" value="AAZ51841.1"/>
    <property type="molecule type" value="Genomic_DNA"/>
</dbReference>
<dbReference type="RefSeq" id="NP_269568.1">
    <property type="nucleotide sequence ID" value="NC_002737.2"/>
</dbReference>
<dbReference type="SMR" id="P0C0H3"/>
<dbReference type="PaxDb" id="1314-HKU360_01265"/>
<dbReference type="KEGG" id="spy:SPy_1489"/>
<dbReference type="KEGG" id="spz:M5005_Spy1223"/>
<dbReference type="PATRIC" id="fig|160490.10.peg.1300"/>
<dbReference type="HOGENOM" id="CLU_105066_3_1_9"/>
<dbReference type="OMA" id="AFSAGKM"/>
<dbReference type="Proteomes" id="UP000000750">
    <property type="component" value="Chromosome"/>
</dbReference>
<dbReference type="GO" id="GO:0005829">
    <property type="term" value="C:cytosol"/>
    <property type="evidence" value="ECO:0007669"/>
    <property type="project" value="TreeGrafter"/>
</dbReference>
<dbReference type="GO" id="GO:0003677">
    <property type="term" value="F:DNA binding"/>
    <property type="evidence" value="ECO:0007669"/>
    <property type="project" value="UniProtKB-KW"/>
</dbReference>
<dbReference type="GO" id="GO:0030527">
    <property type="term" value="F:structural constituent of chromatin"/>
    <property type="evidence" value="ECO:0007669"/>
    <property type="project" value="InterPro"/>
</dbReference>
<dbReference type="GO" id="GO:0030261">
    <property type="term" value="P:chromosome condensation"/>
    <property type="evidence" value="ECO:0007669"/>
    <property type="project" value="UniProtKB-KW"/>
</dbReference>
<dbReference type="CDD" id="cd13831">
    <property type="entry name" value="HU"/>
    <property type="match status" value="1"/>
</dbReference>
<dbReference type="FunFam" id="4.10.520.10:FF:000001">
    <property type="entry name" value="DNA-binding protein HU"/>
    <property type="match status" value="1"/>
</dbReference>
<dbReference type="Gene3D" id="4.10.520.10">
    <property type="entry name" value="IHF-like DNA-binding proteins"/>
    <property type="match status" value="1"/>
</dbReference>
<dbReference type="InterPro" id="IPR000119">
    <property type="entry name" value="Hist_DNA-bd"/>
</dbReference>
<dbReference type="InterPro" id="IPR020816">
    <property type="entry name" value="Histone-like_DNA-bd_CS"/>
</dbReference>
<dbReference type="InterPro" id="IPR010992">
    <property type="entry name" value="IHF-like_DNA-bd_dom_sf"/>
</dbReference>
<dbReference type="PANTHER" id="PTHR33175">
    <property type="entry name" value="DNA-BINDING PROTEIN HU"/>
    <property type="match status" value="1"/>
</dbReference>
<dbReference type="PANTHER" id="PTHR33175:SF3">
    <property type="entry name" value="DNA-BINDING PROTEIN HU-BETA"/>
    <property type="match status" value="1"/>
</dbReference>
<dbReference type="Pfam" id="PF00216">
    <property type="entry name" value="Bac_DNA_binding"/>
    <property type="match status" value="1"/>
</dbReference>
<dbReference type="PRINTS" id="PR01727">
    <property type="entry name" value="DNABINDINGHU"/>
</dbReference>
<dbReference type="SMART" id="SM00411">
    <property type="entry name" value="BHL"/>
    <property type="match status" value="1"/>
</dbReference>
<dbReference type="SUPFAM" id="SSF47729">
    <property type="entry name" value="IHF-like DNA-binding proteins"/>
    <property type="match status" value="1"/>
</dbReference>
<dbReference type="PROSITE" id="PS00045">
    <property type="entry name" value="HISTONE_LIKE"/>
    <property type="match status" value="1"/>
</dbReference>